<comment type="function">
    <text evidence="7 8 10 11">Transcriptional activator that may play a role in the unfolded protein response of the testis. Proposed to be involved in spermiogenesis. May be involved in regulating the maturation of sperm head nuclei. Alternatively proposed to be a paternally delivered transcription factor that may function in early zygotic gene activation. Increases the binding of CREM isoform Tau with CRE. The CREM isoform Tau-CREB3L4 heterodimer functions through CRE but not through UPRE and may recruit HIRA to CRE to regulate histone exchange.</text>
</comment>
<comment type="subunit">
    <text evidence="1">Binds DNA as a dimer (By similarity). Forms a heterodimer with CREM isoform Tau.</text>
</comment>
<comment type="subcellular location">
    <subcellularLocation>
        <location evidence="10">Endoplasmic reticulum membrane</location>
        <topology evidence="10">Single-pass type II membrane protein</topology>
    </subcellularLocation>
    <subcellularLocation>
        <location evidence="10">Cytoplasmic vesicle</location>
        <location evidence="10">Secretory vesicle</location>
        <location evidence="10">Acrosome inner membrane</location>
        <topology evidence="10">Single-pass type II membrane protein</topology>
    </subcellularLocation>
    <text>According to PubMed:16925989 is not observed within nuclei of haploid spermatids at any spermiogenic stage.</text>
</comment>
<comment type="subcellular location">
    <molecule>Processed cyclic AMP-responsive element-binding protein 3-like protein 4</molecule>
    <subcellularLocation>
        <location>Nucleus</location>
    </subcellularLocation>
    <text>Under ER stress the cleaved N-terminal cytoplasmic domain translocates into the nucleus.</text>
</comment>
<comment type="alternative products">
    <event type="alternative promoter"/>
    <isoform>
        <id>Q9D2A5-1</id>
        <name>1</name>
        <name>Tisp40beta</name>
        <sequence type="displayed"/>
    </isoform>
    <isoform>
        <id>Q9D2A5-2</id>
        <name>2</name>
        <name>Tisp40alpha</name>
        <sequence type="described" ref="VSP_025639"/>
    </isoform>
</comment>
<comment type="tissue specificity">
    <text evidence="5 6 7 9 10">Predominantly expressed at high levels in testis with isoform 2 being the predominant isoform. Specifically expressed in postmeiotic spermatids and accumulates in the mid/late stage (at protein level). Ubiquitously expressed at low levels.</text>
</comment>
<comment type="developmental stage">
    <text evidence="6">Expression is very low in the prepubertal testis (2-5-, 8- and 17-day-old) but becomes abruptly induced in the postpubertal testis (29-day-old), after which expression increased (35- and 60-day-old).</text>
</comment>
<comment type="PTM">
    <text evidence="6">Controlled by regulated intramembrane proteolysis (RIP). Following ER stress a fragment containing the cytoplasmic transcription factor domain is released by proteolysis. The cleavage seems to be performed sequentially by site-1 and site-2 proteases (PS1 and PS2). PS1 cleavage may be suppressed by a determinant in the C-terminal region.</text>
</comment>
<comment type="miscellaneous">
    <text>Creb3l4 null-deficient mice show a reduced spermatogenesis but are fertile.</text>
</comment>
<comment type="miscellaneous">
    <molecule>Isoform 1</molecule>
    <text>Minor.</text>
</comment>
<comment type="miscellaneous">
    <molecule>Isoform 2</molecule>
    <text evidence="16">Major.</text>
</comment>
<comment type="similarity">
    <text evidence="16">Belongs to the bZIP family. ATF subfamily.</text>
</comment>
<comment type="caution">
    <text evidence="16">According to PubMed:15938716 binds to the UPR element (UPRE) but not to CRE or the NF-kappa-B site. Preferentially binds DNA with to the consensus sequence 5'-T[GT]ACGT[GA][GT]-3' and has transcriptional activation activity from UPRE. According to PubMed:11956138 and to PubMed:16925989 binds to NF-kappa-B site and has transcriptional activation activity from NF-kappa-B-containing regulatory elements.</text>
</comment>
<feature type="chain" id="PRO_0000288081" description="Cyclic AMP-responsive element-binding protein 3-like protein 4">
    <location>
        <begin position="1"/>
        <end position="370"/>
    </location>
</feature>
<feature type="chain" id="PRO_0000296221" description="Processed cyclic AMP-responsive element-binding protein 3-like protein 4">
    <location>
        <begin position="1"/>
        <end status="unknown"/>
    </location>
</feature>
<feature type="topological domain" description="Cytoplasmic" evidence="2">
    <location>
        <begin position="1"/>
        <end position="271"/>
    </location>
</feature>
<feature type="transmembrane region" description="Helical; Signal-anchor for type II membrane protein" evidence="2">
    <location>
        <begin position="272"/>
        <end position="292"/>
    </location>
</feature>
<feature type="topological domain" description="Lumenal" evidence="2">
    <location>
        <begin position="293"/>
        <end position="370"/>
    </location>
</feature>
<feature type="domain" description="bZIP" evidence="3">
    <location>
        <begin position="193"/>
        <end position="256"/>
    </location>
</feature>
<feature type="region of interest" description="Required for transcriptional activation">
    <location>
        <begin position="1"/>
        <end position="55"/>
    </location>
</feature>
<feature type="region of interest" description="Disordered" evidence="4">
    <location>
        <begin position="61"/>
        <end position="85"/>
    </location>
</feature>
<feature type="region of interest" description="Basic motif" evidence="3">
    <location>
        <begin position="195"/>
        <end position="234"/>
    </location>
</feature>
<feature type="region of interest" description="Leucine-zipper" evidence="3">
    <location>
        <begin position="235"/>
        <end position="256"/>
    </location>
</feature>
<feature type="compositionally biased region" description="Low complexity" evidence="4">
    <location>
        <begin position="76"/>
        <end position="85"/>
    </location>
</feature>
<feature type="site" description="Cleavage; by PS1" evidence="1">
    <location>
        <begin position="314"/>
        <end position="315"/>
    </location>
</feature>
<feature type="glycosylation site" description="N-linked (GlcNAc...) asparagine" evidence="2">
    <location>
        <position position="318"/>
    </location>
</feature>
<feature type="glycosylation site" description="N-linked (GlcNAc...) asparagine" evidence="2">
    <location>
        <position position="342"/>
    </location>
</feature>
<feature type="splice variant" id="VSP_025639" description="In isoform 2." evidence="12 13 14 15">
    <location>
        <begin position="1"/>
        <end position="55"/>
    </location>
</feature>
<feature type="mutagenesis site" description="Lowers translocation to the nucleus." evidence="6">
    <original>L</original>
    <variation>P</variation>
    <location>
        <position position="283"/>
    </location>
</feature>
<feature type="mutagenesis site" description="Abolishes cleavage by SP1." evidence="6">
    <original>R</original>
    <variation>A</variation>
    <location>
        <position position="311"/>
    </location>
</feature>
<gene>
    <name type="primary">Creb3l4</name>
    <name type="synonym">Atce1</name>
    <name type="synonym">Jal</name>
    <name type="synonym">Tisp40</name>
</gene>
<name>CR3L4_MOUSE</name>
<keyword id="KW-0010">Activator</keyword>
<keyword id="KW-0877">Alternative promoter usage</keyword>
<keyword id="KW-0968">Cytoplasmic vesicle</keyword>
<keyword id="KW-0217">Developmental protein</keyword>
<keyword id="KW-0221">Differentiation</keyword>
<keyword id="KW-0238">DNA-binding</keyword>
<keyword id="KW-0256">Endoplasmic reticulum</keyword>
<keyword id="KW-0325">Glycoprotein</keyword>
<keyword id="KW-0472">Membrane</keyword>
<keyword id="KW-0539">Nucleus</keyword>
<keyword id="KW-1185">Reference proteome</keyword>
<keyword id="KW-0735">Signal-anchor</keyword>
<keyword id="KW-0744">Spermatogenesis</keyword>
<keyword id="KW-0804">Transcription</keyword>
<keyword id="KW-0805">Transcription regulation</keyword>
<keyword id="KW-0812">Transmembrane</keyword>
<keyword id="KW-1133">Transmembrane helix</keyword>
<keyword id="KW-0834">Unfolded protein response</keyword>
<dbReference type="EMBL" id="AB047647">
    <property type="protein sequence ID" value="BAB97209.1"/>
    <property type="molecule type" value="mRNA"/>
</dbReference>
<dbReference type="EMBL" id="AF287260">
    <property type="protein sequence ID" value="AAK73568.1"/>
    <property type="molecule type" value="mRNA"/>
</dbReference>
<dbReference type="EMBL" id="AB182651">
    <property type="protein sequence ID" value="BAD26707.1"/>
    <property type="molecule type" value="mRNA"/>
</dbReference>
<dbReference type="EMBL" id="AB182652">
    <property type="protein sequence ID" value="BAD26708.1"/>
    <property type="molecule type" value="mRNA"/>
</dbReference>
<dbReference type="EMBL" id="AB052779">
    <property type="protein sequence ID" value="BAC45036.1"/>
    <property type="molecule type" value="mRNA"/>
</dbReference>
<dbReference type="EMBL" id="AY049978">
    <property type="protein sequence ID" value="AAL13158.1"/>
    <property type="molecule type" value="mRNA"/>
</dbReference>
<dbReference type="EMBL" id="AK019928">
    <property type="protein sequence ID" value="BAB31922.1"/>
    <property type="molecule type" value="mRNA"/>
</dbReference>
<dbReference type="EMBL" id="AK088919">
    <property type="protein sequence ID" value="BAC40653.1"/>
    <property type="molecule type" value="mRNA"/>
</dbReference>
<dbReference type="EMBL" id="AK005918">
    <property type="protein sequence ID" value="BAB24315.1"/>
    <property type="molecule type" value="mRNA"/>
</dbReference>
<dbReference type="EMBL" id="BC022605">
    <property type="protein sequence ID" value="AAH22605.1"/>
    <property type="molecule type" value="mRNA"/>
</dbReference>
<dbReference type="CCDS" id="CCDS17524.1">
    <molecule id="Q9D2A5-1"/>
</dbReference>
<dbReference type="RefSeq" id="NP_001294863.1">
    <molecule id="Q9D2A5-1"/>
    <property type="nucleotide sequence ID" value="NM_001307934.1"/>
</dbReference>
<dbReference type="RefSeq" id="NP_001294864.1">
    <molecule id="Q9D2A5-2"/>
    <property type="nucleotide sequence ID" value="NM_001307935.1"/>
</dbReference>
<dbReference type="RefSeq" id="NP_084356.1">
    <molecule id="Q9D2A5-1"/>
    <property type="nucleotide sequence ID" value="NM_030080.3"/>
</dbReference>
<dbReference type="RefSeq" id="XP_017175297.1">
    <molecule id="Q9D2A5-1"/>
    <property type="nucleotide sequence ID" value="XM_017319808.3"/>
</dbReference>
<dbReference type="RefSeq" id="XP_036019304.1">
    <molecule id="Q9D2A5-1"/>
    <property type="nucleotide sequence ID" value="XM_036163411.1"/>
</dbReference>
<dbReference type="SMR" id="Q9D2A5"/>
<dbReference type="BioGRID" id="219303">
    <property type="interactions" value="10"/>
</dbReference>
<dbReference type="FunCoup" id="Q9D2A5">
    <property type="interactions" value="1301"/>
</dbReference>
<dbReference type="STRING" id="10090.ENSMUSP00000029547"/>
<dbReference type="GlyCosmos" id="Q9D2A5">
    <property type="glycosylation" value="2 sites, No reported glycans"/>
</dbReference>
<dbReference type="GlyGen" id="Q9D2A5">
    <property type="glycosylation" value="2 sites"/>
</dbReference>
<dbReference type="iPTMnet" id="Q9D2A5"/>
<dbReference type="PhosphoSitePlus" id="Q9D2A5"/>
<dbReference type="PaxDb" id="10090-ENSMUSP00000029547"/>
<dbReference type="ProteomicsDB" id="285299">
    <molecule id="Q9D2A5-1"/>
</dbReference>
<dbReference type="ProteomicsDB" id="285300">
    <molecule id="Q9D2A5-2"/>
</dbReference>
<dbReference type="Antibodypedia" id="34142">
    <property type="antibodies" value="270 antibodies from 35 providers"/>
</dbReference>
<dbReference type="DNASU" id="78284"/>
<dbReference type="Ensembl" id="ENSMUST00000029547.10">
    <molecule id="Q9D2A5-1"/>
    <property type="protein sequence ID" value="ENSMUSP00000029547.4"/>
    <property type="gene ID" value="ENSMUSG00000027938.12"/>
</dbReference>
<dbReference type="Ensembl" id="ENSMUST00000107369.2">
    <molecule id="Q9D2A5-1"/>
    <property type="protein sequence ID" value="ENSMUSP00000102992.2"/>
    <property type="gene ID" value="ENSMUSG00000027938.12"/>
</dbReference>
<dbReference type="GeneID" id="78284"/>
<dbReference type="KEGG" id="mmu:78284"/>
<dbReference type="UCSC" id="uc008qbp.1">
    <molecule id="Q9D2A5-1"/>
    <property type="organism name" value="mouse"/>
</dbReference>
<dbReference type="AGR" id="MGI:1916603"/>
<dbReference type="CTD" id="148327"/>
<dbReference type="MGI" id="MGI:1916603">
    <property type="gene designation" value="Creb3l4"/>
</dbReference>
<dbReference type="VEuPathDB" id="HostDB:ENSMUSG00000027938"/>
<dbReference type="eggNOG" id="KOG0709">
    <property type="taxonomic scope" value="Eukaryota"/>
</dbReference>
<dbReference type="GeneTree" id="ENSGT00940000160806"/>
<dbReference type="HOGENOM" id="CLU_047257_3_0_1"/>
<dbReference type="InParanoid" id="Q9D2A5"/>
<dbReference type="OMA" id="AGPEEYQ"/>
<dbReference type="OrthoDB" id="674948at2759"/>
<dbReference type="PhylomeDB" id="Q9D2A5"/>
<dbReference type="TreeFam" id="TF316079"/>
<dbReference type="BioGRID-ORCS" id="78284">
    <property type="hits" value="1 hit in 80 CRISPR screens"/>
</dbReference>
<dbReference type="ChiTaRS" id="Gata3">
    <property type="organism name" value="mouse"/>
</dbReference>
<dbReference type="PRO" id="PR:Q9D2A5"/>
<dbReference type="Proteomes" id="UP000000589">
    <property type="component" value="Chromosome 3"/>
</dbReference>
<dbReference type="RNAct" id="Q9D2A5">
    <property type="molecule type" value="protein"/>
</dbReference>
<dbReference type="Bgee" id="ENSMUSG00000027938">
    <property type="expression patterns" value="Expressed in spermatid and 108 other cell types or tissues"/>
</dbReference>
<dbReference type="GO" id="GO:0005829">
    <property type="term" value="C:cytosol"/>
    <property type="evidence" value="ECO:0000304"/>
    <property type="project" value="Reactome"/>
</dbReference>
<dbReference type="GO" id="GO:0005783">
    <property type="term" value="C:endoplasmic reticulum"/>
    <property type="evidence" value="ECO:0000314"/>
    <property type="project" value="MGI"/>
</dbReference>
<dbReference type="GO" id="GO:0005789">
    <property type="term" value="C:endoplasmic reticulum membrane"/>
    <property type="evidence" value="ECO:0007669"/>
    <property type="project" value="UniProtKB-SubCell"/>
</dbReference>
<dbReference type="GO" id="GO:0000139">
    <property type="term" value="C:Golgi membrane"/>
    <property type="evidence" value="ECO:0000304"/>
    <property type="project" value="Reactome"/>
</dbReference>
<dbReference type="GO" id="GO:0002079">
    <property type="term" value="C:inner acrosomal membrane"/>
    <property type="evidence" value="ECO:0007669"/>
    <property type="project" value="UniProtKB-SubCell"/>
</dbReference>
<dbReference type="GO" id="GO:0005739">
    <property type="term" value="C:mitochondrion"/>
    <property type="evidence" value="ECO:0007669"/>
    <property type="project" value="Ensembl"/>
</dbReference>
<dbReference type="GO" id="GO:0031965">
    <property type="term" value="C:nuclear membrane"/>
    <property type="evidence" value="ECO:0007669"/>
    <property type="project" value="Ensembl"/>
</dbReference>
<dbReference type="GO" id="GO:0005654">
    <property type="term" value="C:nucleoplasm"/>
    <property type="evidence" value="ECO:0000304"/>
    <property type="project" value="Reactome"/>
</dbReference>
<dbReference type="GO" id="GO:0003677">
    <property type="term" value="F:DNA binding"/>
    <property type="evidence" value="ECO:0000314"/>
    <property type="project" value="MGI"/>
</dbReference>
<dbReference type="GO" id="GO:0001228">
    <property type="term" value="F:DNA-binding transcription activator activity, RNA polymerase II-specific"/>
    <property type="evidence" value="ECO:0000314"/>
    <property type="project" value="NTNU_SB"/>
</dbReference>
<dbReference type="GO" id="GO:0000977">
    <property type="term" value="F:RNA polymerase II transcription regulatory region sequence-specific DNA binding"/>
    <property type="evidence" value="ECO:0000314"/>
    <property type="project" value="NTNU_SB"/>
</dbReference>
<dbReference type="GO" id="GO:0030154">
    <property type="term" value="P:cell differentiation"/>
    <property type="evidence" value="ECO:0007669"/>
    <property type="project" value="UniProtKB-KW"/>
</dbReference>
<dbReference type="GO" id="GO:0045944">
    <property type="term" value="P:positive regulation of transcription by RNA polymerase II"/>
    <property type="evidence" value="ECO:0000314"/>
    <property type="project" value="MGI"/>
</dbReference>
<dbReference type="GO" id="GO:0006986">
    <property type="term" value="P:response to unfolded protein"/>
    <property type="evidence" value="ECO:0007669"/>
    <property type="project" value="UniProtKB-KW"/>
</dbReference>
<dbReference type="GO" id="GO:0007283">
    <property type="term" value="P:spermatogenesis"/>
    <property type="evidence" value="ECO:0000315"/>
    <property type="project" value="MGI"/>
</dbReference>
<dbReference type="CDD" id="cd14689">
    <property type="entry name" value="bZIP_CREB3"/>
    <property type="match status" value="1"/>
</dbReference>
<dbReference type="FunFam" id="1.20.5.170:FF:000042">
    <property type="entry name" value="Cyclic AMP-responsive element-binding protein 3-like protein 3"/>
    <property type="match status" value="1"/>
</dbReference>
<dbReference type="Gene3D" id="1.20.5.170">
    <property type="match status" value="1"/>
</dbReference>
<dbReference type="InterPro" id="IPR004827">
    <property type="entry name" value="bZIP"/>
</dbReference>
<dbReference type="InterPro" id="IPR046347">
    <property type="entry name" value="bZIP_sf"/>
</dbReference>
<dbReference type="InterPro" id="IPR051381">
    <property type="entry name" value="CREB_ATF_subfamily"/>
</dbReference>
<dbReference type="PANTHER" id="PTHR45996">
    <property type="entry name" value="AGAP001464-PB"/>
    <property type="match status" value="1"/>
</dbReference>
<dbReference type="PANTHER" id="PTHR45996:SF2">
    <property type="entry name" value="CYCLIC AMP-RESPONSIVE ELEMENT-BINDING PROTEIN 3-LIKE PROTEIN 4"/>
    <property type="match status" value="1"/>
</dbReference>
<dbReference type="Pfam" id="PF00170">
    <property type="entry name" value="bZIP_1"/>
    <property type="match status" value="1"/>
</dbReference>
<dbReference type="SMART" id="SM00338">
    <property type="entry name" value="BRLZ"/>
    <property type="match status" value="1"/>
</dbReference>
<dbReference type="SUPFAM" id="SSF57959">
    <property type="entry name" value="Leucine zipper domain"/>
    <property type="match status" value="1"/>
</dbReference>
<dbReference type="PROSITE" id="PS50217">
    <property type="entry name" value="BZIP"/>
    <property type="match status" value="1"/>
</dbReference>
<proteinExistence type="evidence at protein level"/>
<evidence type="ECO:0000250" key="1"/>
<evidence type="ECO:0000255" key="2"/>
<evidence type="ECO:0000255" key="3">
    <source>
        <dbReference type="PROSITE-ProRule" id="PRU00978"/>
    </source>
</evidence>
<evidence type="ECO:0000256" key="4">
    <source>
        <dbReference type="SAM" id="MobiDB-lite"/>
    </source>
</evidence>
<evidence type="ECO:0000269" key="5">
    <source>
    </source>
</evidence>
<evidence type="ECO:0000269" key="6">
    <source>
    </source>
</evidence>
<evidence type="ECO:0000269" key="7">
    <source>
    </source>
</evidence>
<evidence type="ECO:0000269" key="8">
    <source>
    </source>
</evidence>
<evidence type="ECO:0000269" key="9">
    <source>
    </source>
</evidence>
<evidence type="ECO:0000269" key="10">
    <source>
    </source>
</evidence>
<evidence type="ECO:0000269" key="11">
    <source>
    </source>
</evidence>
<evidence type="ECO:0000303" key="12">
    <source>
    </source>
</evidence>
<evidence type="ECO:0000303" key="13">
    <source>
    </source>
</evidence>
<evidence type="ECO:0000303" key="14">
    <source>
    </source>
</evidence>
<evidence type="ECO:0000303" key="15">
    <source>
    </source>
</evidence>
<evidence type="ECO:0000305" key="16"/>
<sequence>MELGCPELLEPPEDIFSTGSFLELGFNGPASKVPVTRGLQKSEPDDFLNLFIDPNMIHCSETSPGRDSGVSEDPGSPAQQASSSPALYEVVYDSGTLQGTQREAGPTFGLISIQIDQWTPALMVPDACTVSGLPSDSHRHILPRVSTRAPAPPAAMPSCQHHLFLTDEEKQLLAQEGITLPSHLPLTKAEERILKKIRRKIRNKQSAQDSRRRKKEYLDGLESRVAACSEQNQKLQRKVQELERQNIFLMEQVRQLQKLTAQTSSRAAQTSTCVLILLFSLALIILPSFSPFQGQSEARPEDYQLHGVISRNILTHENVTENLESPVLKSKLEELPEAPTTNGSTKTHLKMRVKARPPGQIRGMVHTDEM</sequence>
<accession>Q9D2A5</accession>
<accession>Q9DAE0</accession>
<organism>
    <name type="scientific">Mus musculus</name>
    <name type="common">Mouse</name>
    <dbReference type="NCBI Taxonomy" id="10090"/>
    <lineage>
        <taxon>Eukaryota</taxon>
        <taxon>Metazoa</taxon>
        <taxon>Chordata</taxon>
        <taxon>Craniata</taxon>
        <taxon>Vertebrata</taxon>
        <taxon>Euteleostomi</taxon>
        <taxon>Mammalia</taxon>
        <taxon>Eutheria</taxon>
        <taxon>Euarchontoglires</taxon>
        <taxon>Glires</taxon>
        <taxon>Rodentia</taxon>
        <taxon>Myomorpha</taxon>
        <taxon>Muroidea</taxon>
        <taxon>Muridae</taxon>
        <taxon>Murinae</taxon>
        <taxon>Mus</taxon>
        <taxon>Mus</taxon>
    </lineage>
</organism>
<protein>
    <recommendedName>
        <fullName>Cyclic AMP-responsive element-binding protein 3-like protein 4</fullName>
        <shortName>cAMP-responsive element-binding protein 3-like protein 4</shortName>
    </recommendedName>
    <alternativeName>
        <fullName>Attaching to CRE-like 1</fullName>
        <shortName>ATCE1</shortName>
        <shortName>Acre1</shortName>
    </alternativeName>
    <alternativeName>
        <fullName>Transcript induced in spermiogenesis protein 40</fullName>
        <shortName>Tisp40</shortName>
    </alternativeName>
    <alternativeName>
        <fullName>mJAL</fullName>
    </alternativeName>
    <component>
        <recommendedName>
            <fullName>Processed cyclic AMP-responsive element-binding protein 3-like protein 4</fullName>
        </recommendedName>
    </component>
</protein>
<reference key="1">
    <citation type="journal article" date="2002" name="EMBO Rep.">
        <title>Use of stepwise subtraction to comprehensively isolate mouse genes whose transcription is up-regulated during spermiogenesis.</title>
        <authorList>
            <person name="Fujii T."/>
            <person name="Tamura K."/>
            <person name="Masai K."/>
            <person name="Tanaka H."/>
            <person name="Nishimune Y."/>
            <person name="Nojima H."/>
        </authorList>
    </citation>
    <scope>NUCLEOTIDE SEQUENCE [MRNA] (ISOFORM 2)</scope>
    <source>
        <tissue>Testis</tissue>
    </source>
</reference>
<reference key="2">
    <citation type="journal article" date="2002" name="Endocrinology">
        <title>Atce1: a novel mouse cyclic adenosine 3',5'-monophosphate-responsive element-binding protein-like gene exclusively expressed in postmeiotic spermatids.</title>
        <authorList>
            <person name="Stelzer G."/>
            <person name="Don J."/>
        </authorList>
    </citation>
    <scope>NUCLEOTIDE SEQUENCE [MRNA] (ISOFORM 2)</scope>
    <scope>TISSUE SPECIFICITY</scope>
    <scope>DNA-BINDING</scope>
</reference>
<reference key="3">
    <citation type="journal article" date="2005" name="Genes Cells">
        <title>Tisp40, a spermatid specific bZip transcription factor, functions by binding to the unfolded protein response element via the Rip pathway.</title>
        <authorList>
            <person name="Nagamori I."/>
            <person name="Yabuta N."/>
            <person name="Fujii T."/>
            <person name="Tanaka H."/>
            <person name="Yomogida K."/>
            <person name="Nishimune Y."/>
            <person name="Nojima H."/>
        </authorList>
    </citation>
    <scope>NUCLEOTIDE SEQUENCE [MRNA] (ISOFORMS 1 AND 2)</scope>
    <scope>PROTEOLYTIC PROCESSING</scope>
    <scope>TISSUE SPECIFICITY</scope>
    <scope>DEVELOPMENTAL STAGE</scope>
    <scope>MUTAGENESIS OF LEU-283 AND ARG-311</scope>
    <source>
        <tissue>Testis</tissue>
    </source>
</reference>
<reference key="4">
    <citation type="submission" date="2000-12" db="EMBL/GenBank/DDBJ databases">
        <title>Homo sapiens and Mus musculus JAL gene.</title>
        <authorList>
            <person name="Fujita K."/>
            <person name="Hatakeyama S."/>
            <person name="Ishikawa F."/>
        </authorList>
    </citation>
    <scope>NUCLEOTIDE SEQUENCE [MRNA] (ISOFORM 1)</scope>
</reference>
<reference key="5">
    <citation type="submission" date="2001-08" db="EMBL/GenBank/DDBJ databases">
        <title>Mouse Acre1 contains CRE binding domain.</title>
        <authorList>
            <person name="Guo J.H."/>
            <person name="Dai F.Y."/>
            <person name="Yu L."/>
        </authorList>
    </citation>
    <scope>NUCLEOTIDE SEQUENCE [MRNA] (ISOFORM 1)</scope>
</reference>
<reference key="6">
    <citation type="journal article" date="2005" name="Science">
        <title>The transcriptional landscape of the mammalian genome.</title>
        <authorList>
            <person name="Carninci P."/>
            <person name="Kasukawa T."/>
            <person name="Katayama S."/>
            <person name="Gough J."/>
            <person name="Frith M.C."/>
            <person name="Maeda N."/>
            <person name="Oyama R."/>
            <person name="Ravasi T."/>
            <person name="Lenhard B."/>
            <person name="Wells C."/>
            <person name="Kodzius R."/>
            <person name="Shimokawa K."/>
            <person name="Bajic V.B."/>
            <person name="Brenner S.E."/>
            <person name="Batalov S."/>
            <person name="Forrest A.R."/>
            <person name="Zavolan M."/>
            <person name="Davis M.J."/>
            <person name="Wilming L.G."/>
            <person name="Aidinis V."/>
            <person name="Allen J.E."/>
            <person name="Ambesi-Impiombato A."/>
            <person name="Apweiler R."/>
            <person name="Aturaliya R.N."/>
            <person name="Bailey T.L."/>
            <person name="Bansal M."/>
            <person name="Baxter L."/>
            <person name="Beisel K.W."/>
            <person name="Bersano T."/>
            <person name="Bono H."/>
            <person name="Chalk A.M."/>
            <person name="Chiu K.P."/>
            <person name="Choudhary V."/>
            <person name="Christoffels A."/>
            <person name="Clutterbuck D.R."/>
            <person name="Crowe M.L."/>
            <person name="Dalla E."/>
            <person name="Dalrymple B.P."/>
            <person name="de Bono B."/>
            <person name="Della Gatta G."/>
            <person name="di Bernardo D."/>
            <person name="Down T."/>
            <person name="Engstrom P."/>
            <person name="Fagiolini M."/>
            <person name="Faulkner G."/>
            <person name="Fletcher C.F."/>
            <person name="Fukushima T."/>
            <person name="Furuno M."/>
            <person name="Futaki S."/>
            <person name="Gariboldi M."/>
            <person name="Georgii-Hemming P."/>
            <person name="Gingeras T.R."/>
            <person name="Gojobori T."/>
            <person name="Green R.E."/>
            <person name="Gustincich S."/>
            <person name="Harbers M."/>
            <person name="Hayashi Y."/>
            <person name="Hensch T.K."/>
            <person name="Hirokawa N."/>
            <person name="Hill D."/>
            <person name="Huminiecki L."/>
            <person name="Iacono M."/>
            <person name="Ikeo K."/>
            <person name="Iwama A."/>
            <person name="Ishikawa T."/>
            <person name="Jakt M."/>
            <person name="Kanapin A."/>
            <person name="Katoh M."/>
            <person name="Kawasawa Y."/>
            <person name="Kelso J."/>
            <person name="Kitamura H."/>
            <person name="Kitano H."/>
            <person name="Kollias G."/>
            <person name="Krishnan S.P."/>
            <person name="Kruger A."/>
            <person name="Kummerfeld S.K."/>
            <person name="Kurochkin I.V."/>
            <person name="Lareau L.F."/>
            <person name="Lazarevic D."/>
            <person name="Lipovich L."/>
            <person name="Liu J."/>
            <person name="Liuni S."/>
            <person name="McWilliam S."/>
            <person name="Madan Babu M."/>
            <person name="Madera M."/>
            <person name="Marchionni L."/>
            <person name="Matsuda H."/>
            <person name="Matsuzawa S."/>
            <person name="Miki H."/>
            <person name="Mignone F."/>
            <person name="Miyake S."/>
            <person name="Morris K."/>
            <person name="Mottagui-Tabar S."/>
            <person name="Mulder N."/>
            <person name="Nakano N."/>
            <person name="Nakauchi H."/>
            <person name="Ng P."/>
            <person name="Nilsson R."/>
            <person name="Nishiguchi S."/>
            <person name="Nishikawa S."/>
            <person name="Nori F."/>
            <person name="Ohara O."/>
            <person name="Okazaki Y."/>
            <person name="Orlando V."/>
            <person name="Pang K.C."/>
            <person name="Pavan W.J."/>
            <person name="Pavesi G."/>
            <person name="Pesole G."/>
            <person name="Petrovsky N."/>
            <person name="Piazza S."/>
            <person name="Reed J."/>
            <person name="Reid J.F."/>
            <person name="Ring B.Z."/>
            <person name="Ringwald M."/>
            <person name="Rost B."/>
            <person name="Ruan Y."/>
            <person name="Salzberg S.L."/>
            <person name="Sandelin A."/>
            <person name="Schneider C."/>
            <person name="Schoenbach C."/>
            <person name="Sekiguchi K."/>
            <person name="Semple C.A."/>
            <person name="Seno S."/>
            <person name="Sessa L."/>
            <person name="Sheng Y."/>
            <person name="Shibata Y."/>
            <person name="Shimada H."/>
            <person name="Shimada K."/>
            <person name="Silva D."/>
            <person name="Sinclair B."/>
            <person name="Sperling S."/>
            <person name="Stupka E."/>
            <person name="Sugiura K."/>
            <person name="Sultana R."/>
            <person name="Takenaka Y."/>
            <person name="Taki K."/>
            <person name="Tammoja K."/>
            <person name="Tan S.L."/>
            <person name="Tang S."/>
            <person name="Taylor M.S."/>
            <person name="Tegner J."/>
            <person name="Teichmann S.A."/>
            <person name="Ueda H.R."/>
            <person name="van Nimwegen E."/>
            <person name="Verardo R."/>
            <person name="Wei C.L."/>
            <person name="Yagi K."/>
            <person name="Yamanishi H."/>
            <person name="Zabarovsky E."/>
            <person name="Zhu S."/>
            <person name="Zimmer A."/>
            <person name="Hide W."/>
            <person name="Bult C."/>
            <person name="Grimmond S.M."/>
            <person name="Teasdale R.D."/>
            <person name="Liu E.T."/>
            <person name="Brusic V."/>
            <person name="Quackenbush J."/>
            <person name="Wahlestedt C."/>
            <person name="Mattick J.S."/>
            <person name="Hume D.A."/>
            <person name="Kai C."/>
            <person name="Sasaki D."/>
            <person name="Tomaru Y."/>
            <person name="Fukuda S."/>
            <person name="Kanamori-Katayama M."/>
            <person name="Suzuki M."/>
            <person name="Aoki J."/>
            <person name="Arakawa T."/>
            <person name="Iida J."/>
            <person name="Imamura K."/>
            <person name="Itoh M."/>
            <person name="Kato T."/>
            <person name="Kawaji H."/>
            <person name="Kawagashira N."/>
            <person name="Kawashima T."/>
            <person name="Kojima M."/>
            <person name="Kondo S."/>
            <person name="Konno H."/>
            <person name="Nakano K."/>
            <person name="Ninomiya N."/>
            <person name="Nishio T."/>
            <person name="Okada M."/>
            <person name="Plessy C."/>
            <person name="Shibata K."/>
            <person name="Shiraki T."/>
            <person name="Suzuki S."/>
            <person name="Tagami M."/>
            <person name="Waki K."/>
            <person name="Watahiki A."/>
            <person name="Okamura-Oho Y."/>
            <person name="Suzuki H."/>
            <person name="Kawai J."/>
            <person name="Hayashizaki Y."/>
        </authorList>
    </citation>
    <scope>NUCLEOTIDE SEQUENCE [LARGE SCALE MRNA] (ISOFORMS 1 AND 2)</scope>
    <source>
        <strain>C57BL/6J</strain>
        <strain>NOD</strain>
        <tissue>Pituitary</tissue>
        <tissue>Testis</tissue>
        <tissue>Thymus</tissue>
    </source>
</reference>
<reference key="7">
    <citation type="journal article" date="2004" name="Genome Res.">
        <title>The status, quality, and expansion of the NIH full-length cDNA project: the Mammalian Gene Collection (MGC).</title>
        <authorList>
            <consortium name="The MGC Project Team"/>
        </authorList>
    </citation>
    <scope>NUCLEOTIDE SEQUENCE [LARGE SCALE MRNA] (ISOFORM 1)</scope>
    <source>
        <strain>FVB/N</strain>
        <tissue>Salivary gland</tissue>
    </source>
</reference>
<reference key="8">
    <citation type="journal article" date="2005" name="Mol. Cell. Biol.">
        <title>Reduction of spermatogenesis but not fertility in Creb3l4-deficient mice.</title>
        <authorList>
            <person name="Adham I.M."/>
            <person name="Eck T.J."/>
            <person name="Mierau K."/>
            <person name="Muller N."/>
            <person name="Sallam M.A."/>
            <person name="Paprotta I."/>
            <person name="Schubert S."/>
            <person name="Hoyer-Fender S."/>
            <person name="Engel W."/>
        </authorList>
    </citation>
    <scope>FUNCTION</scope>
    <scope>TISSUE SPECIFICITY</scope>
</reference>
<reference key="9">
    <citation type="journal article" date="2006" name="Dev. Biol.">
        <title>The enigma of ATCE1, an acrosome-associated transcription factor.</title>
        <authorList>
            <person name="Gil S."/>
            <person name="Yosef D."/>
            <person name="Golan N."/>
            <person name="Don J."/>
        </authorList>
    </citation>
    <scope>FUNCTION</scope>
    <scope>SUBCELLULAR LOCATION</scope>
    <scope>TISSUE SPECIFICITY</scope>
</reference>
<reference key="10">
    <citation type="journal article" date="2006" name="Genes Cells">
        <title>The testes-specific bZip type transcription factor Tisp40 plays a role in ER stress responses and chromatin packaging during spermiogenesis.</title>
        <authorList>
            <person name="Nagamori I."/>
            <person name="Yomogida K."/>
            <person name="Ikawa M."/>
            <person name="Okabe M."/>
            <person name="Yabuta N."/>
            <person name="Nojima H."/>
        </authorList>
    </citation>
    <scope>FUNCTION</scope>
</reference>
<reference key="11">
    <citation type="journal article" date="2006" name="J. Androl.">
        <title>Stage-specific expression of the Atce1/Tisp40alpha isoform of CREB3L4 in mouse spermatids.</title>
        <authorList>
            <person name="El-Alfy M."/>
            <person name="Azzi L."/>
            <person name="Lessard J."/>
            <person name="Lavergne E."/>
            <person name="Pelletier M."/>
            <person name="Labrie C."/>
        </authorList>
    </citation>
    <scope>TISSUE SPECIFICITY</scope>
</reference>
<reference key="12">
    <citation type="journal article" date="2006" name="J. Biol. Chem.">
        <title>Transcription factors, cAMP-responsive element modulator (CREM) and Tisp40, act in concert in postmeiotic transcriptional regulation.</title>
        <authorList>
            <person name="Nagamori I."/>
            <person name="Yomogida K."/>
            <person name="Adams P.D."/>
            <person name="Sassone-Corsi P."/>
            <person name="Nojima H."/>
        </authorList>
    </citation>
    <scope>FUNCTION</scope>
    <scope>INTERACTION WITH CREM</scope>
</reference>